<protein>
    <recommendedName>
        <fullName evidence="1">Adenine phosphoribosyltransferase</fullName>
        <shortName evidence="1">APRT</shortName>
        <ecNumber evidence="1">2.4.2.7</ecNumber>
    </recommendedName>
</protein>
<feature type="chain" id="PRO_1000000298" description="Adenine phosphoribosyltransferase">
    <location>
        <begin position="1"/>
        <end position="175"/>
    </location>
</feature>
<organism>
    <name type="scientific">Lactobacillus delbrueckii subsp. bulgaricus (strain ATCC BAA-365 / Lb-18)</name>
    <dbReference type="NCBI Taxonomy" id="321956"/>
    <lineage>
        <taxon>Bacteria</taxon>
        <taxon>Bacillati</taxon>
        <taxon>Bacillota</taxon>
        <taxon>Bacilli</taxon>
        <taxon>Lactobacillales</taxon>
        <taxon>Lactobacillaceae</taxon>
        <taxon>Lactobacillus</taxon>
    </lineage>
</organism>
<evidence type="ECO:0000255" key="1">
    <source>
        <dbReference type="HAMAP-Rule" id="MF_00004"/>
    </source>
</evidence>
<proteinExistence type="inferred from homology"/>
<comment type="function">
    <text evidence="1">Catalyzes a salvage reaction resulting in the formation of AMP, that is energically less costly than de novo synthesis.</text>
</comment>
<comment type="catalytic activity">
    <reaction evidence="1">
        <text>AMP + diphosphate = 5-phospho-alpha-D-ribose 1-diphosphate + adenine</text>
        <dbReference type="Rhea" id="RHEA:16609"/>
        <dbReference type="ChEBI" id="CHEBI:16708"/>
        <dbReference type="ChEBI" id="CHEBI:33019"/>
        <dbReference type="ChEBI" id="CHEBI:58017"/>
        <dbReference type="ChEBI" id="CHEBI:456215"/>
        <dbReference type="EC" id="2.4.2.7"/>
    </reaction>
</comment>
<comment type="pathway">
    <text evidence="1">Purine metabolism; AMP biosynthesis via salvage pathway; AMP from adenine: step 1/1.</text>
</comment>
<comment type="subunit">
    <text evidence="1">Homodimer.</text>
</comment>
<comment type="subcellular location">
    <subcellularLocation>
        <location evidence="1">Cytoplasm</location>
    </subcellularLocation>
</comment>
<comment type="similarity">
    <text evidence="1">Belongs to the purine/pyrimidine phosphoribosyltransferase family.</text>
</comment>
<reference key="1">
    <citation type="journal article" date="2006" name="Proc. Natl. Acad. Sci. U.S.A.">
        <title>Comparative genomics of the lactic acid bacteria.</title>
        <authorList>
            <person name="Makarova K.S."/>
            <person name="Slesarev A."/>
            <person name="Wolf Y.I."/>
            <person name="Sorokin A."/>
            <person name="Mirkin B."/>
            <person name="Koonin E.V."/>
            <person name="Pavlov A."/>
            <person name="Pavlova N."/>
            <person name="Karamychev V."/>
            <person name="Polouchine N."/>
            <person name="Shakhova V."/>
            <person name="Grigoriev I."/>
            <person name="Lou Y."/>
            <person name="Rohksar D."/>
            <person name="Lucas S."/>
            <person name="Huang K."/>
            <person name="Goodstein D.M."/>
            <person name="Hawkins T."/>
            <person name="Plengvidhya V."/>
            <person name="Welker D."/>
            <person name="Hughes J."/>
            <person name="Goh Y."/>
            <person name="Benson A."/>
            <person name="Baldwin K."/>
            <person name="Lee J.-H."/>
            <person name="Diaz-Muniz I."/>
            <person name="Dosti B."/>
            <person name="Smeianov V."/>
            <person name="Wechter W."/>
            <person name="Barabote R."/>
            <person name="Lorca G."/>
            <person name="Altermann E."/>
            <person name="Barrangou R."/>
            <person name="Ganesan B."/>
            <person name="Xie Y."/>
            <person name="Rawsthorne H."/>
            <person name="Tamir D."/>
            <person name="Parker C."/>
            <person name="Breidt F."/>
            <person name="Broadbent J.R."/>
            <person name="Hutkins R."/>
            <person name="O'Sullivan D."/>
            <person name="Steele J."/>
            <person name="Unlu G."/>
            <person name="Saier M.H. Jr."/>
            <person name="Klaenhammer T."/>
            <person name="Richardson P."/>
            <person name="Kozyavkin S."/>
            <person name="Weimer B.C."/>
            <person name="Mills D.A."/>
        </authorList>
    </citation>
    <scope>NUCLEOTIDE SEQUENCE [LARGE SCALE GENOMIC DNA]</scope>
    <source>
        <strain>ATCC BAA-365 / Lb-18</strain>
    </source>
</reference>
<sequence>MSIDFKKYIASVKDFPNEGIIFRDITPILQDGEAFAAATHEIAEYAKSRQADVIVGPEARGFLVGTPVAIELGIGFVPARKPHKLPREVEAAAYDLEYGSNVLEMHKDAIKPGQRVVICDDLMATAGTMHATKELIERLGGKVVGAAFYIELTDLKGREKFPDVDIFSLVQYTGA</sequence>
<name>APT_LACDB</name>
<keyword id="KW-0963">Cytoplasm</keyword>
<keyword id="KW-0328">Glycosyltransferase</keyword>
<keyword id="KW-0660">Purine salvage</keyword>
<keyword id="KW-0808">Transferase</keyword>
<gene>
    <name evidence="1" type="primary">apt</name>
    <name type="ordered locus">LBUL_1222</name>
</gene>
<accession>Q049X1</accession>
<dbReference type="EC" id="2.4.2.7" evidence="1"/>
<dbReference type="EMBL" id="CP000412">
    <property type="protein sequence ID" value="ABJ58751.1"/>
    <property type="molecule type" value="Genomic_DNA"/>
</dbReference>
<dbReference type="RefSeq" id="WP_003623930.1">
    <property type="nucleotide sequence ID" value="NC_008529.1"/>
</dbReference>
<dbReference type="SMR" id="Q049X1"/>
<dbReference type="KEGG" id="lbu:LBUL_1222"/>
<dbReference type="HOGENOM" id="CLU_063339_3_0_9"/>
<dbReference type="BioCyc" id="LDEL321956:LBUL_RS05715-MONOMER"/>
<dbReference type="UniPathway" id="UPA00588">
    <property type="reaction ID" value="UER00646"/>
</dbReference>
<dbReference type="GO" id="GO:0005737">
    <property type="term" value="C:cytoplasm"/>
    <property type="evidence" value="ECO:0007669"/>
    <property type="project" value="UniProtKB-SubCell"/>
</dbReference>
<dbReference type="GO" id="GO:0002055">
    <property type="term" value="F:adenine binding"/>
    <property type="evidence" value="ECO:0007669"/>
    <property type="project" value="TreeGrafter"/>
</dbReference>
<dbReference type="GO" id="GO:0003999">
    <property type="term" value="F:adenine phosphoribosyltransferase activity"/>
    <property type="evidence" value="ECO:0007669"/>
    <property type="project" value="UniProtKB-UniRule"/>
</dbReference>
<dbReference type="GO" id="GO:0016208">
    <property type="term" value="F:AMP binding"/>
    <property type="evidence" value="ECO:0007669"/>
    <property type="project" value="TreeGrafter"/>
</dbReference>
<dbReference type="GO" id="GO:0006168">
    <property type="term" value="P:adenine salvage"/>
    <property type="evidence" value="ECO:0007669"/>
    <property type="project" value="InterPro"/>
</dbReference>
<dbReference type="GO" id="GO:0044209">
    <property type="term" value="P:AMP salvage"/>
    <property type="evidence" value="ECO:0007669"/>
    <property type="project" value="UniProtKB-UniRule"/>
</dbReference>
<dbReference type="GO" id="GO:0006166">
    <property type="term" value="P:purine ribonucleoside salvage"/>
    <property type="evidence" value="ECO:0007669"/>
    <property type="project" value="UniProtKB-KW"/>
</dbReference>
<dbReference type="CDD" id="cd06223">
    <property type="entry name" value="PRTases_typeI"/>
    <property type="match status" value="1"/>
</dbReference>
<dbReference type="FunFam" id="3.40.50.2020:FF:000004">
    <property type="entry name" value="Adenine phosphoribosyltransferase"/>
    <property type="match status" value="1"/>
</dbReference>
<dbReference type="Gene3D" id="3.40.50.2020">
    <property type="match status" value="1"/>
</dbReference>
<dbReference type="HAMAP" id="MF_00004">
    <property type="entry name" value="Aden_phosphoribosyltr"/>
    <property type="match status" value="1"/>
</dbReference>
<dbReference type="InterPro" id="IPR005764">
    <property type="entry name" value="Ade_phspho_trans"/>
</dbReference>
<dbReference type="InterPro" id="IPR000836">
    <property type="entry name" value="PRibTrfase_dom"/>
</dbReference>
<dbReference type="InterPro" id="IPR029057">
    <property type="entry name" value="PRTase-like"/>
</dbReference>
<dbReference type="InterPro" id="IPR050054">
    <property type="entry name" value="UPRTase/APRTase"/>
</dbReference>
<dbReference type="NCBIfam" id="TIGR01090">
    <property type="entry name" value="apt"/>
    <property type="match status" value="1"/>
</dbReference>
<dbReference type="NCBIfam" id="NF002633">
    <property type="entry name" value="PRK02304.1-2"/>
    <property type="match status" value="1"/>
</dbReference>
<dbReference type="NCBIfam" id="NF002634">
    <property type="entry name" value="PRK02304.1-3"/>
    <property type="match status" value="1"/>
</dbReference>
<dbReference type="NCBIfam" id="NF002636">
    <property type="entry name" value="PRK02304.1-5"/>
    <property type="match status" value="1"/>
</dbReference>
<dbReference type="PANTHER" id="PTHR32315">
    <property type="entry name" value="ADENINE PHOSPHORIBOSYLTRANSFERASE"/>
    <property type="match status" value="1"/>
</dbReference>
<dbReference type="PANTHER" id="PTHR32315:SF3">
    <property type="entry name" value="ADENINE PHOSPHORIBOSYLTRANSFERASE"/>
    <property type="match status" value="1"/>
</dbReference>
<dbReference type="Pfam" id="PF00156">
    <property type="entry name" value="Pribosyltran"/>
    <property type="match status" value="1"/>
</dbReference>
<dbReference type="SUPFAM" id="SSF53271">
    <property type="entry name" value="PRTase-like"/>
    <property type="match status" value="1"/>
</dbReference>
<dbReference type="PROSITE" id="PS00103">
    <property type="entry name" value="PUR_PYR_PR_TRANSFER"/>
    <property type="match status" value="1"/>
</dbReference>